<protein>
    <recommendedName>
        <fullName>Flagellar brake protein YcgR</fullName>
    </recommendedName>
    <alternativeName>
        <fullName>Cyclic di-GMP binding protein YcgR</fullName>
    </alternativeName>
</protein>
<proteinExistence type="evidence at protein level"/>
<name>YCGR_ECOLI</name>
<sequence length="244" mass="27857">MSHYHEQFLKQNPLAVLGVLRDLHKAAIPLRLSWNGGQLISKLLAITPDKLVLDFGSQAEDNIAVLKAQHITITAETQGAKVEFTVEQLQQSEYLQLPAFITVPPPTLWFVQRRRYFRISAPLHPPYFCQTKLADNSTLRFRLYDLSLGGMGALLETAKPAELQEGMRFAQIEVNMGQWGVFHFDAQLISISERKVIDGKNETITTPRLSFRFLNVSPTVERQLQRIIFSLEREAREKADKVRD</sequence>
<accession>P76010</accession>
<accession>Q9R7N3</accession>
<dbReference type="EMBL" id="U00096">
    <property type="protein sequence ID" value="AAC74278.1"/>
    <property type="molecule type" value="Genomic_DNA"/>
</dbReference>
<dbReference type="EMBL" id="AP009048">
    <property type="protein sequence ID" value="BAA36052.2"/>
    <property type="molecule type" value="Genomic_DNA"/>
</dbReference>
<dbReference type="PIR" id="G64865">
    <property type="entry name" value="G64865"/>
</dbReference>
<dbReference type="RefSeq" id="NP_415712.1">
    <property type="nucleotide sequence ID" value="NC_000913.3"/>
</dbReference>
<dbReference type="RefSeq" id="WP_000020169.1">
    <property type="nucleotide sequence ID" value="NZ_SSZK01000010.1"/>
</dbReference>
<dbReference type="PDB" id="5Y6F">
    <property type="method" value="X-ray"/>
    <property type="resolution" value="2.30 A"/>
    <property type="chains" value="A=1-244"/>
</dbReference>
<dbReference type="PDB" id="5Y6G">
    <property type="method" value="X-ray"/>
    <property type="resolution" value="2.30 A"/>
    <property type="chains" value="A=111-244"/>
</dbReference>
<dbReference type="PDB" id="5Y6H">
    <property type="method" value="X-ray"/>
    <property type="resolution" value="1.77 A"/>
    <property type="chains" value="A=1-111"/>
</dbReference>
<dbReference type="PDBsum" id="5Y6F"/>
<dbReference type="PDBsum" id="5Y6G"/>
<dbReference type="PDBsum" id="5Y6H"/>
<dbReference type="SASBDB" id="P76010"/>
<dbReference type="SMR" id="P76010"/>
<dbReference type="BioGRID" id="4260858">
    <property type="interactions" value="135"/>
</dbReference>
<dbReference type="BioGRID" id="851925">
    <property type="interactions" value="1"/>
</dbReference>
<dbReference type="DIP" id="DIP-11561N"/>
<dbReference type="FunCoup" id="P76010">
    <property type="interactions" value="24"/>
</dbReference>
<dbReference type="IntAct" id="P76010">
    <property type="interactions" value="7"/>
</dbReference>
<dbReference type="STRING" id="511145.b1194"/>
<dbReference type="PaxDb" id="511145-b1194"/>
<dbReference type="EnsemblBacteria" id="AAC74278">
    <property type="protein sequence ID" value="AAC74278"/>
    <property type="gene ID" value="b1194"/>
</dbReference>
<dbReference type="GeneID" id="947609"/>
<dbReference type="KEGG" id="ecj:JW1183"/>
<dbReference type="KEGG" id="eco:b1194"/>
<dbReference type="KEGG" id="ecoc:C3026_07025"/>
<dbReference type="PATRIC" id="fig|1411691.4.peg.1092"/>
<dbReference type="EchoBASE" id="EB3658"/>
<dbReference type="eggNOG" id="COG5581">
    <property type="taxonomic scope" value="Bacteria"/>
</dbReference>
<dbReference type="HOGENOM" id="CLU_086025_1_0_6"/>
<dbReference type="InParanoid" id="P76010"/>
<dbReference type="OMA" id="HFQRRRH"/>
<dbReference type="OrthoDB" id="5572581at2"/>
<dbReference type="PhylomeDB" id="P76010"/>
<dbReference type="BioCyc" id="EcoCyc:G6623-MONOMER"/>
<dbReference type="PRO" id="PR:P76010"/>
<dbReference type="Proteomes" id="UP000000625">
    <property type="component" value="Chromosome"/>
</dbReference>
<dbReference type="GO" id="GO:0009425">
    <property type="term" value="C:bacterial-type flagellum basal body"/>
    <property type="evidence" value="ECO:0007669"/>
    <property type="project" value="UniProtKB-SubCell"/>
</dbReference>
<dbReference type="GO" id="GO:0035438">
    <property type="term" value="F:cyclic-di-GMP binding"/>
    <property type="evidence" value="ECO:0000314"/>
    <property type="project" value="UniProtKB"/>
</dbReference>
<dbReference type="GO" id="GO:0071973">
    <property type="term" value="P:bacterial-type flagellum-dependent cell motility"/>
    <property type="evidence" value="ECO:0000315"/>
    <property type="project" value="EcoCyc"/>
</dbReference>
<dbReference type="GO" id="GO:1902201">
    <property type="term" value="P:negative regulation of bacterial-type flagellum-dependent cell motility"/>
    <property type="evidence" value="ECO:0000315"/>
    <property type="project" value="EcoCyc"/>
</dbReference>
<dbReference type="GO" id="GO:0071945">
    <property type="term" value="P:regulation of bacterial-type flagellum-dependent cell motility by regulation of motor speed"/>
    <property type="evidence" value="ECO:0000316"/>
    <property type="project" value="UniProtKB"/>
</dbReference>
<dbReference type="FunFam" id="2.30.110.10:FF:000008">
    <property type="entry name" value="Flagellar brake protein YcgR"/>
    <property type="match status" value="1"/>
</dbReference>
<dbReference type="FunFam" id="2.40.10.220:FF:000002">
    <property type="entry name" value="Flagellar brake protein YcgR"/>
    <property type="match status" value="1"/>
</dbReference>
<dbReference type="Gene3D" id="2.30.110.10">
    <property type="entry name" value="Electron Transport, Fmn-binding Protein, Chain A"/>
    <property type="match status" value="1"/>
</dbReference>
<dbReference type="Gene3D" id="2.40.10.220">
    <property type="entry name" value="predicted glycosyltransferase like domains"/>
    <property type="match status" value="1"/>
</dbReference>
<dbReference type="HAMAP" id="MF_01457">
    <property type="entry name" value="YcgR"/>
    <property type="match status" value="1"/>
</dbReference>
<dbReference type="InterPro" id="IPR009875">
    <property type="entry name" value="PilZ_domain"/>
</dbReference>
<dbReference type="InterPro" id="IPR012349">
    <property type="entry name" value="Split_barrel_FMN-bd"/>
</dbReference>
<dbReference type="InterPro" id="IPR023787">
    <property type="entry name" value="T3SS_YcgR"/>
</dbReference>
<dbReference type="InterPro" id="IPR009926">
    <property type="entry name" value="T3SS_YcgR_PilZN"/>
</dbReference>
<dbReference type="Pfam" id="PF07238">
    <property type="entry name" value="PilZ"/>
    <property type="match status" value="1"/>
</dbReference>
<dbReference type="Pfam" id="PF07317">
    <property type="entry name" value="PilZN"/>
    <property type="match status" value="1"/>
</dbReference>
<reference key="1">
    <citation type="journal article" date="1996" name="DNA Res.">
        <title>A 718-kb DNA sequence of the Escherichia coli K-12 genome corresponding to the 12.7-28.0 min region on the linkage map.</title>
        <authorList>
            <person name="Oshima T."/>
            <person name="Aiba H."/>
            <person name="Baba T."/>
            <person name="Fujita K."/>
            <person name="Hayashi K."/>
            <person name="Honjo A."/>
            <person name="Ikemoto K."/>
            <person name="Inada T."/>
            <person name="Itoh T."/>
            <person name="Kajihara M."/>
            <person name="Kanai K."/>
            <person name="Kashimoto K."/>
            <person name="Kimura S."/>
            <person name="Kitagawa M."/>
            <person name="Makino K."/>
            <person name="Masuda S."/>
            <person name="Miki T."/>
            <person name="Mizobuchi K."/>
            <person name="Mori H."/>
            <person name="Motomura K."/>
            <person name="Nakamura Y."/>
            <person name="Nashimoto H."/>
            <person name="Nishio Y."/>
            <person name="Saito N."/>
            <person name="Sampei G."/>
            <person name="Seki Y."/>
            <person name="Tagami H."/>
            <person name="Takemoto K."/>
            <person name="Wada C."/>
            <person name="Yamamoto Y."/>
            <person name="Yano M."/>
            <person name="Horiuchi T."/>
        </authorList>
    </citation>
    <scope>NUCLEOTIDE SEQUENCE [LARGE SCALE GENOMIC DNA]</scope>
    <source>
        <strain>K12 / W3110 / ATCC 27325 / DSM 5911</strain>
    </source>
</reference>
<reference key="2">
    <citation type="journal article" date="1997" name="Science">
        <title>The complete genome sequence of Escherichia coli K-12.</title>
        <authorList>
            <person name="Blattner F.R."/>
            <person name="Plunkett G. III"/>
            <person name="Bloch C.A."/>
            <person name="Perna N.T."/>
            <person name="Burland V."/>
            <person name="Riley M."/>
            <person name="Collado-Vides J."/>
            <person name="Glasner J.D."/>
            <person name="Rode C.K."/>
            <person name="Mayhew G.F."/>
            <person name="Gregor J."/>
            <person name="Davis N.W."/>
            <person name="Kirkpatrick H.A."/>
            <person name="Goeden M.A."/>
            <person name="Rose D.J."/>
            <person name="Mau B."/>
            <person name="Shao Y."/>
        </authorList>
    </citation>
    <scope>NUCLEOTIDE SEQUENCE [LARGE SCALE GENOMIC DNA]</scope>
    <source>
        <strain>K12 / MG1655 / ATCC 47076</strain>
    </source>
</reference>
<reference key="3">
    <citation type="journal article" date="2006" name="Mol. Syst. Biol.">
        <title>Highly accurate genome sequences of Escherichia coli K-12 strains MG1655 and W3110.</title>
        <authorList>
            <person name="Hayashi K."/>
            <person name="Morooka N."/>
            <person name="Yamamoto Y."/>
            <person name="Fujita K."/>
            <person name="Isono K."/>
            <person name="Choi S."/>
            <person name="Ohtsubo E."/>
            <person name="Baba T."/>
            <person name="Wanner B.L."/>
            <person name="Mori H."/>
            <person name="Horiuchi T."/>
        </authorList>
    </citation>
    <scope>NUCLEOTIDE SEQUENCE [LARGE SCALE GENOMIC DNA]</scope>
    <source>
        <strain>K12 / W3110 / ATCC 27325 / DSM 5911</strain>
    </source>
</reference>
<reference key="4">
    <citation type="journal article" date="2000" name="J. Mol. Biol.">
        <title>Two novel flagellar components and H-NS are involved in the motor function of Escherichia coli.</title>
        <authorList>
            <person name="Ko M."/>
            <person name="Park C."/>
        </authorList>
    </citation>
    <scope>ROLE IN FLAGELLAR MOTILITY</scope>
    <source>
        <strain>K12</strain>
    </source>
</reference>
<reference key="5">
    <citation type="journal article" date="2006" name="Bioinformatics">
        <title>PilZ domain is part of the bacterial c-di-GMP binding protein.</title>
        <authorList>
            <person name="Amikam D."/>
            <person name="Galperin M.Y."/>
        </authorList>
    </citation>
    <scope>DOMAIN PILZ</scope>
</reference>
<reference key="6">
    <citation type="journal article" date="2006" name="J. Biol. Chem.">
        <title>The PilZ domain is a receptor for the second messenger c-di-GMP: the PilZ domain protein YcgR controls motility in enterobacteria.</title>
        <authorList>
            <person name="Ryjenkov D.A."/>
            <person name="Simm R."/>
            <person name="Romling U."/>
            <person name="Gomelsky M."/>
        </authorList>
    </citation>
    <scope>FUNCTION IN MOTILITY</scope>
    <scope>C-DI-GMP-BINDING</scope>
    <scope>SUBUNIT</scope>
    <scope>DISRUPTION PHENOTYPE</scope>
    <scope>MUTAGENESIS OF ARG-118 AND SER-147</scope>
    <source>
        <strain>TOB1</strain>
    </source>
</reference>
<reference key="7">
    <citation type="journal article" date="2010" name="Cell">
        <title>Second messenger-mediated adjustment of bacterial swimming velocity.</title>
        <authorList>
            <person name="Boehm A."/>
            <person name="Kaiser M."/>
            <person name="Li H."/>
            <person name="Spangler C."/>
            <person name="Kasper C.A."/>
            <person name="Ackermann M."/>
            <person name="Kaever V."/>
            <person name="Sourjik V."/>
            <person name="Roth V."/>
            <person name="Jenal U."/>
        </authorList>
    </citation>
    <scope>FUNCTION AS A FLAGELLAR BRAKE</scope>
    <scope>INTERACTION WITH MOTA</scope>
    <scope>SUBCELLULAR LOCATION</scope>
    <scope>DISRUPTION PHENOTYPE</scope>
    <source>
        <strain>K12 / MG1655 / ATCC 47076</strain>
    </source>
</reference>
<reference key="8">
    <citation type="journal article" date="2010" name="Mol. Cell">
        <title>The c-di-GMP binding protein YcgR controls flagellar motor direction and speed to affect chemotaxis by a 'backstop brake' mechanism.</title>
        <authorList>
            <person name="Paul K."/>
            <person name="Nieto V."/>
            <person name="Carlquist W.C."/>
            <person name="Blair D.F."/>
            <person name="Harshey R.M."/>
        </authorList>
    </citation>
    <scope>FUNCTION AS A FLAGELLAR BRAKE</scope>
    <scope>INTERACTION WITH FLIG AND FLIM</scope>
    <scope>MUTAGENESIS OF LYS-42; ASN-62; LYS-81; GLN-223 AND ILE-227</scope>
    <source>
        <strain>K12 / RP3098</strain>
    </source>
</reference>
<evidence type="ECO:0000269" key="1">
    <source>
    </source>
</evidence>
<evidence type="ECO:0000269" key="2">
    <source>
    </source>
</evidence>
<evidence type="ECO:0000269" key="3">
    <source>
    </source>
</evidence>
<evidence type="ECO:0000269" key="4">
    <source>
    </source>
</evidence>
<evidence type="ECO:0000269" key="5">
    <source>
    </source>
</evidence>
<evidence type="ECO:0000305" key="6"/>
<evidence type="ECO:0007829" key="7">
    <source>
        <dbReference type="PDB" id="5Y6F"/>
    </source>
</evidence>
<evidence type="ECO:0007829" key="8">
    <source>
        <dbReference type="PDB" id="5Y6G"/>
    </source>
</evidence>
<evidence type="ECO:0007829" key="9">
    <source>
        <dbReference type="PDB" id="5Y6H"/>
    </source>
</evidence>
<comment type="function">
    <text evidence="1 3 4 5">Acts as a flagellar brake, regulating swimming and swarming in a bis-(3'-5') cyclic diguanylic acid (c-di-GMP)-dependent manner. When bound to c-di-GMP it binds to elements of the flagellar motor (MotA (PubMed:20303158) and/or FliG and FliM (PubMed:20346719), binding to FliM also occurs in the absence of c-di-GMP), causing the motor to slow down. Thus, increasing levels of c-di-GMP lead to decreased motility. Probably binds 1 c-di-GMP dimer per subunit.</text>
</comment>
<comment type="subunit">
    <text evidence="3 4 5 6">Monomer (Probable). Interacts with MotA in the flagellar basal bodies (PubMed:20303158). In another study (PubMed:20346719) it was not seen to interact with MotA, but instead with FliM and FliG, also in the flagellar basal body.</text>
</comment>
<comment type="interaction">
    <interactant intactId="EBI-554507">
        <id>P76010</id>
    </interactant>
    <interactant intactId="EBI-1126524">
        <id>P0ABZ1</id>
        <label>fliG</label>
    </interactant>
    <organismsDiffer>false</organismsDiffer>
    <experiments>3</experiments>
</comment>
<comment type="interaction">
    <interactant intactId="EBI-554507">
        <id>P76010</id>
    </interactant>
    <interactant intactId="EBI-560439">
        <id>P06974</id>
        <label>fliM</label>
    </interactant>
    <organismsDiffer>false</organismsDiffer>
    <experiments>3</experiments>
</comment>
<comment type="subcellular location">
    <subcellularLocation>
        <location evidence="4">Bacterial flagellum basal body</location>
    </subcellularLocation>
</comment>
<comment type="domain">
    <text evidence="2">The N-terminal domain is involved in FliG binding, the C-terminal domain is involved in FliM binding.</text>
</comment>
<comment type="domain">
    <text evidence="2">The PilZ domain is able to bind c-di-GMP, but with a lower affinity (dissociation constant of 1.45 uM) compared to the whole protein (dissociation constant of 0.84 uM).</text>
</comment>
<comment type="disruption phenotype">
    <text evidence="3 4">No visible motility phenotype. Disruption of this gene suppresses the reduced motility of a pdeH disruption, thus the double disruption is motile.</text>
</comment>
<comment type="similarity">
    <text evidence="6">Belongs to the YcgR family.</text>
</comment>
<gene>
    <name type="primary">ycgR</name>
    <name type="ordered locus">b1194</name>
    <name type="ordered locus">JW1183</name>
</gene>
<feature type="chain" id="PRO_0000168858" description="Flagellar brake protein YcgR">
    <location>
        <begin position="1"/>
        <end position="244"/>
    </location>
</feature>
<feature type="domain" description="PilZ">
    <location>
        <begin position="112"/>
        <end position="230"/>
    </location>
</feature>
<feature type="mutagenesis site" description="Suppression of the pdeH disruption motility phenotype." evidence="5">
    <original>K</original>
    <variation>D</variation>
    <location>
        <position position="42"/>
    </location>
</feature>
<feature type="mutagenesis site" description="Significant suppression of the pdeH disruption motility phenotype, less binding to FliG." evidence="5">
    <original>N</original>
    <variation>W</variation>
    <location>
        <position position="62"/>
    </location>
</feature>
<feature type="mutagenesis site" description="Significant suppression of the pdeH disruption motility phenotype, less binding to FliG." evidence="5">
    <original>K</original>
    <variation>D</variation>
    <location>
        <position position="81"/>
    </location>
</feature>
<feature type="mutagenesis site" description="Complete loss of c-di-GMP binding in vitro, suppresses pdeH disruption (PubMed:16920715). Somewhat reduced binding to FliM, stimulated by c-di-GMP, greatly reduced binding to FliG (PubMed:20346719)." evidence="3 5">
    <original>R</original>
    <variation>D</variation>
    <location>
        <position position="118"/>
    </location>
</feature>
<feature type="mutagenesis site" description="Slight increase in affinity for c-di-GMP." evidence="3">
    <original>S</original>
    <variation>A</variation>
    <location>
        <position position="147"/>
    </location>
</feature>
<feature type="mutagenesis site" description="Significant suppression of the pdeH disruption motility phenotype, no binding to FliM." evidence="5">
    <original>Q</original>
    <variation>P</variation>
    <location>
        <position position="223"/>
    </location>
</feature>
<feature type="mutagenesis site" description="Significant suppression of the pdeH disruption motility phenotype." evidence="5">
    <original>Q</original>
    <variation>W</variation>
    <location>
        <position position="223"/>
    </location>
</feature>
<feature type="mutagenesis site" description="Some suppression of the pdeH disruption motility phenotype, no binding to FliM." evidence="5">
    <original>I</original>
    <variation>W</variation>
    <location>
        <position position="227"/>
    </location>
</feature>
<feature type="helix" evidence="9">
    <location>
        <begin position="6"/>
        <end position="8"/>
    </location>
</feature>
<feature type="helix" evidence="9">
    <location>
        <begin position="13"/>
        <end position="26"/>
    </location>
</feature>
<feature type="strand" evidence="9">
    <location>
        <begin position="30"/>
        <end position="34"/>
    </location>
</feature>
<feature type="strand" evidence="9">
    <location>
        <begin position="37"/>
        <end position="41"/>
    </location>
</feature>
<feature type="strand" evidence="9">
    <location>
        <begin position="43"/>
        <end position="47"/>
    </location>
</feature>
<feature type="strand" evidence="9">
    <location>
        <begin position="50"/>
        <end position="54"/>
    </location>
</feature>
<feature type="helix" evidence="9">
    <location>
        <begin position="59"/>
        <end position="67"/>
    </location>
</feature>
<feature type="strand" evidence="9">
    <location>
        <begin position="71"/>
        <end position="77"/>
    </location>
</feature>
<feature type="strand" evidence="9">
    <location>
        <begin position="80"/>
        <end position="87"/>
    </location>
</feature>
<feature type="strand" evidence="9">
    <location>
        <begin position="90"/>
        <end position="94"/>
    </location>
</feature>
<feature type="strand" evidence="9">
    <location>
        <begin position="97"/>
        <end position="102"/>
    </location>
</feature>
<feature type="strand" evidence="9">
    <location>
        <begin position="108"/>
        <end position="111"/>
    </location>
</feature>
<feature type="strand" evidence="8">
    <location>
        <begin position="123"/>
        <end position="125"/>
    </location>
</feature>
<feature type="strand" evidence="7">
    <location>
        <begin position="128"/>
        <end position="132"/>
    </location>
</feature>
<feature type="strand" evidence="7">
    <location>
        <begin position="138"/>
        <end position="147"/>
    </location>
</feature>
<feature type="strand" evidence="7">
    <location>
        <begin position="150"/>
        <end position="154"/>
    </location>
</feature>
<feature type="strand" evidence="7">
    <location>
        <begin position="172"/>
        <end position="175"/>
    </location>
</feature>
<feature type="helix" evidence="8">
    <location>
        <begin position="177"/>
        <end position="179"/>
    </location>
</feature>
<feature type="strand" evidence="7">
    <location>
        <begin position="181"/>
        <end position="193"/>
    </location>
</feature>
<feature type="strand" evidence="7">
    <location>
        <begin position="207"/>
        <end position="215"/>
    </location>
</feature>
<feature type="helix" evidence="7">
    <location>
        <begin position="218"/>
        <end position="240"/>
    </location>
</feature>
<keyword id="KW-0002">3D-structure</keyword>
<keyword id="KW-0975">Bacterial flagellum</keyword>
<keyword id="KW-0973">c-di-GMP</keyword>
<keyword id="KW-0547">Nucleotide-binding</keyword>
<keyword id="KW-1185">Reference proteome</keyword>
<organism>
    <name type="scientific">Escherichia coli (strain K12)</name>
    <dbReference type="NCBI Taxonomy" id="83333"/>
    <lineage>
        <taxon>Bacteria</taxon>
        <taxon>Pseudomonadati</taxon>
        <taxon>Pseudomonadota</taxon>
        <taxon>Gammaproteobacteria</taxon>
        <taxon>Enterobacterales</taxon>
        <taxon>Enterobacteriaceae</taxon>
        <taxon>Escherichia</taxon>
    </lineage>
</organism>